<comment type="function">
    <text evidence="1">With S4 and S12 plays an important role in translational accuracy.</text>
</comment>
<comment type="subunit">
    <text evidence="1">Part of the 30S ribosomal subunit. Contacts protein S4.</text>
</comment>
<comment type="domain">
    <text>The N-terminal domain interacts with the head of the 30S subunit; the C-terminal domain interacts with the body and contacts protein S4. The interaction surface between S4 and S5 is involved in control of translational fidelity.</text>
</comment>
<comment type="similarity">
    <text evidence="1">Belongs to the universal ribosomal protein uS5 family.</text>
</comment>
<feature type="chain" id="PRO_0000323230" description="Small ribosomal subunit protein uS5">
    <location>
        <begin position="1"/>
        <end position="213"/>
    </location>
</feature>
<feature type="domain" description="S5 DRBM" evidence="1">
    <location>
        <begin position="49"/>
        <end position="112"/>
    </location>
</feature>
<gene>
    <name evidence="1" type="primary">rps5</name>
    <name type="ordered locus">Msm_0741</name>
</gene>
<keyword id="KW-0687">Ribonucleoprotein</keyword>
<keyword id="KW-0689">Ribosomal protein</keyword>
<keyword id="KW-0694">RNA-binding</keyword>
<keyword id="KW-0699">rRNA-binding</keyword>
<dbReference type="EMBL" id="CP000678">
    <property type="protein sequence ID" value="ABQ86946.1"/>
    <property type="molecule type" value="Genomic_DNA"/>
</dbReference>
<dbReference type="SMR" id="A5UL68"/>
<dbReference type="STRING" id="420247.Msm_0741"/>
<dbReference type="EnsemblBacteria" id="ABQ86946">
    <property type="protein sequence ID" value="ABQ86946"/>
    <property type="gene ID" value="Msm_0741"/>
</dbReference>
<dbReference type="KEGG" id="msi:Msm_0741"/>
<dbReference type="PATRIC" id="fig|420247.28.peg.738"/>
<dbReference type="eggNOG" id="arCOG04087">
    <property type="taxonomic scope" value="Archaea"/>
</dbReference>
<dbReference type="HOGENOM" id="CLU_065898_0_1_2"/>
<dbReference type="Proteomes" id="UP000001992">
    <property type="component" value="Chromosome"/>
</dbReference>
<dbReference type="GO" id="GO:0022627">
    <property type="term" value="C:cytosolic small ribosomal subunit"/>
    <property type="evidence" value="ECO:0007669"/>
    <property type="project" value="TreeGrafter"/>
</dbReference>
<dbReference type="GO" id="GO:0019843">
    <property type="term" value="F:rRNA binding"/>
    <property type="evidence" value="ECO:0007669"/>
    <property type="project" value="UniProtKB-UniRule"/>
</dbReference>
<dbReference type="GO" id="GO:0003735">
    <property type="term" value="F:structural constituent of ribosome"/>
    <property type="evidence" value="ECO:0007669"/>
    <property type="project" value="InterPro"/>
</dbReference>
<dbReference type="GO" id="GO:0006412">
    <property type="term" value="P:translation"/>
    <property type="evidence" value="ECO:0007669"/>
    <property type="project" value="UniProtKB-UniRule"/>
</dbReference>
<dbReference type="FunFam" id="3.30.160.20:FF:000002">
    <property type="entry name" value="40S ribosomal protein S2"/>
    <property type="match status" value="1"/>
</dbReference>
<dbReference type="FunFam" id="3.30.230.10:FF:000004">
    <property type="entry name" value="40S ribosomal protein S2"/>
    <property type="match status" value="1"/>
</dbReference>
<dbReference type="Gene3D" id="3.30.160.20">
    <property type="match status" value="1"/>
</dbReference>
<dbReference type="Gene3D" id="3.30.230.10">
    <property type="match status" value="1"/>
</dbReference>
<dbReference type="HAMAP" id="MF_01307_A">
    <property type="entry name" value="Ribosomal_uS5_A"/>
    <property type="match status" value="1"/>
</dbReference>
<dbReference type="InterPro" id="IPR020568">
    <property type="entry name" value="Ribosomal_Su5_D2-typ_SF"/>
</dbReference>
<dbReference type="InterPro" id="IPR000851">
    <property type="entry name" value="Ribosomal_uS5"/>
</dbReference>
<dbReference type="InterPro" id="IPR047866">
    <property type="entry name" value="Ribosomal_uS5_arc"/>
</dbReference>
<dbReference type="InterPro" id="IPR005324">
    <property type="entry name" value="Ribosomal_uS5_C"/>
</dbReference>
<dbReference type="InterPro" id="IPR005711">
    <property type="entry name" value="Ribosomal_uS5_euk/arc"/>
</dbReference>
<dbReference type="InterPro" id="IPR013810">
    <property type="entry name" value="Ribosomal_uS5_N"/>
</dbReference>
<dbReference type="InterPro" id="IPR018192">
    <property type="entry name" value="Ribosomal_uS5_N_CS"/>
</dbReference>
<dbReference type="InterPro" id="IPR014721">
    <property type="entry name" value="Ribsml_uS5_D2-typ_fold_subgr"/>
</dbReference>
<dbReference type="NCBIfam" id="NF003125">
    <property type="entry name" value="PRK04044.1"/>
    <property type="match status" value="1"/>
</dbReference>
<dbReference type="NCBIfam" id="TIGR01020">
    <property type="entry name" value="uS5_euk_arch"/>
    <property type="match status" value="1"/>
</dbReference>
<dbReference type="PANTHER" id="PTHR13718:SF4">
    <property type="entry name" value="40S RIBOSOMAL PROTEIN S2"/>
    <property type="match status" value="1"/>
</dbReference>
<dbReference type="PANTHER" id="PTHR13718">
    <property type="entry name" value="RIBOSOMAL S SUBUNIT"/>
    <property type="match status" value="1"/>
</dbReference>
<dbReference type="Pfam" id="PF00333">
    <property type="entry name" value="Ribosomal_S5"/>
    <property type="match status" value="1"/>
</dbReference>
<dbReference type="Pfam" id="PF03719">
    <property type="entry name" value="Ribosomal_S5_C"/>
    <property type="match status" value="1"/>
</dbReference>
<dbReference type="SUPFAM" id="SSF54768">
    <property type="entry name" value="dsRNA-binding domain-like"/>
    <property type="match status" value="1"/>
</dbReference>
<dbReference type="SUPFAM" id="SSF54211">
    <property type="entry name" value="Ribosomal protein S5 domain 2-like"/>
    <property type="match status" value="1"/>
</dbReference>
<dbReference type="PROSITE" id="PS00585">
    <property type="entry name" value="RIBOSOMAL_S5"/>
    <property type="match status" value="1"/>
</dbReference>
<dbReference type="PROSITE" id="PS50881">
    <property type="entry name" value="S5_DSRBD"/>
    <property type="match status" value="1"/>
</dbReference>
<sequence>MSFNIDEWEPKTKMGKLVKEGTITDIDEIFEKGLPIMELEIVDALVPDLEEEVMDVNLVQRMHKSGRKVNFRVIVAVGNKNGYVGLGQGKAKEVGPAIRKAVDNAKYNLIKVRRGCGDWGCVCGKEHTVPFKVQGKASSVSVSLMPAPAGVGLVVGDVGKTILNLAGIKDVWSQSFGQTQTTVNFANAIFDALKTLSAVKASEADLKKMGVKY</sequence>
<name>RS5_METS3</name>
<evidence type="ECO:0000255" key="1">
    <source>
        <dbReference type="HAMAP-Rule" id="MF_01307"/>
    </source>
</evidence>
<evidence type="ECO:0000305" key="2"/>
<accession>A5UL68</accession>
<reference key="1">
    <citation type="journal article" date="2007" name="Proc. Natl. Acad. Sci. U.S.A.">
        <title>Genomic and metabolic adaptations of Methanobrevibacter smithii to the human gut.</title>
        <authorList>
            <person name="Samuel B.S."/>
            <person name="Hansen E.E."/>
            <person name="Manchester J.K."/>
            <person name="Coutinho P.M."/>
            <person name="Henrissat B."/>
            <person name="Fulton R."/>
            <person name="Latreille P."/>
            <person name="Kim K."/>
            <person name="Wilson R.K."/>
            <person name="Gordon J.I."/>
        </authorList>
    </citation>
    <scope>NUCLEOTIDE SEQUENCE [LARGE SCALE GENOMIC DNA]</scope>
    <source>
        <strain>ATCC 35061 / DSM 861 / OCM 144 / PS</strain>
    </source>
</reference>
<proteinExistence type="inferred from homology"/>
<organism>
    <name type="scientific">Methanobrevibacter smithii (strain ATCC 35061 / DSM 861 / OCM 144 / PS)</name>
    <dbReference type="NCBI Taxonomy" id="420247"/>
    <lineage>
        <taxon>Archaea</taxon>
        <taxon>Methanobacteriati</taxon>
        <taxon>Methanobacteriota</taxon>
        <taxon>Methanomada group</taxon>
        <taxon>Methanobacteria</taxon>
        <taxon>Methanobacteriales</taxon>
        <taxon>Methanobacteriaceae</taxon>
        <taxon>Methanobrevibacter</taxon>
    </lineage>
</organism>
<protein>
    <recommendedName>
        <fullName evidence="1">Small ribosomal subunit protein uS5</fullName>
    </recommendedName>
    <alternativeName>
        <fullName evidence="2">30S ribosomal protein S5</fullName>
    </alternativeName>
</protein>